<accession>Q3Y6B8</accession>
<proteinExistence type="evidence at protein level"/>
<gene>
    <name evidence="6" type="primary">TsSte24p</name>
</gene>
<reference evidence="9" key="1">
    <citation type="journal article" date="2006" name="Int. J. Parasitol.">
        <title>A membrane-associated metalloprotease of Taenia solium metacestode structurally related to the FACE-1/Ste24p protease family.</title>
        <authorList>
            <person name="Cai G.B."/>
            <person name="Bae Y.A."/>
            <person name="Kim S.H."/>
            <person name="Na B.K."/>
            <person name="Kim T.S."/>
            <person name="Jiang M.S."/>
            <person name="Kong Y."/>
        </authorList>
    </citation>
    <scope>NUCLEOTIDE SEQUENCE [MRNA]</scope>
    <scope>FUNCTION</scope>
    <scope>COFACTOR</scope>
    <scope>ACTIVITY REGULATION</scope>
    <scope>BIOPHYSICOCHEMICAL PROPERTIES</scope>
    <scope>SUBUNIT</scope>
    <scope>DEVELOPMENTAL STAGE</scope>
</reference>
<evidence type="ECO:0000250" key="1">
    <source>
        <dbReference type="UniProtKB" id="O75844"/>
    </source>
</evidence>
<evidence type="ECO:0000250" key="2">
    <source>
        <dbReference type="UniProtKB" id="P47154"/>
    </source>
</evidence>
<evidence type="ECO:0000250" key="3">
    <source>
        <dbReference type="UniProtKB" id="Q9XVE5"/>
    </source>
</evidence>
<evidence type="ECO:0000255" key="4"/>
<evidence type="ECO:0000269" key="5">
    <source>
    </source>
</evidence>
<evidence type="ECO:0000303" key="6">
    <source>
    </source>
</evidence>
<evidence type="ECO:0000305" key="7"/>
<evidence type="ECO:0000305" key="8">
    <source>
    </source>
</evidence>
<evidence type="ECO:0000312" key="9">
    <source>
        <dbReference type="EMBL" id="AAZ80484.1"/>
    </source>
</evidence>
<sequence>MDVGGALDLYGCSVNVYNAILIFIWVLFLWETYINLRQLKVAKRVTESPEEIKCLMNDVDFDKSRRYAIDKMNFDIVSGFYNILSLSAVLYFQLIAWAWHKSQEHMLFVCSYAPRSFGTTEGSEILFSLLFTVYVALFQFFESLPWSYYRHFVIEERYGFNKQTIGFFIKDRLKSLAVGLVIGLPIISMLVWIIKAGGHYFYIYAYGFTFVVSFIIMFIYPEFIAPIFDRYEHFPDCELRKKIEELAASIEFPLKKLYVVEGSKRSSHSNAYFYGFGKNKRIVLFDTLIKGFKMPGVEADSSANADESSDETQNRGCGDDEEILATLAHELGHWKLKHMTFNLIIAQINIFFMFFAFGQLINVDQLFVDFGFPPSTAPILIRLIVVFQFIFMPYSSVLEFLMTMLSRKFEFQADAFAVSLKSGEKLKSALLVLTKDNLSFPVYDWLYSMCNHSHPPIIERLAAIDAKMGKEK</sequence>
<protein>
    <recommendedName>
        <fullName evidence="7">CAAX prenyl protease 1 homolog</fullName>
        <ecNumber evidence="3">3.4.24.84</ecNumber>
    </recommendedName>
    <alternativeName>
        <fullName evidence="8">Zinc metalloproteinase Ste24 homolog</fullName>
    </alternativeName>
</protein>
<comment type="function">
    <text evidence="3 5">Zinc-dependent metalloproteinase (PubMed:16750535). Proteolytically removes the C-terminal three residues of farnesylated proteins (By similarity).</text>
</comment>
<comment type="catalytic activity">
    <reaction evidence="3">
        <text>Hydrolyzes the peptide bond -P2-(S-farnesyl or geranylgeranyl)C-P1'-P2'-P3'-COOH where P1' and P2' are amino acids with aliphatic side chains and P3' is any C-terminal residue.</text>
        <dbReference type="EC" id="3.4.24.84"/>
    </reaction>
</comment>
<comment type="cofactor">
    <cofactor evidence="5">
        <name>Zn(2+)</name>
        <dbReference type="ChEBI" id="CHEBI:29105"/>
    </cofactor>
    <text evidence="1">Binds 1 zinc ion per subunit.</text>
</comment>
<comment type="activity regulation">
    <text evidence="5">Inhibited by ethylenediaminetetraacetic acid (EDTA) but not by serine, aspartic or cysteine protease inhibitors. Inhibited by high concentration of Zn(2+) (&gt; 0.1 mM).</text>
</comment>
<comment type="biophysicochemical properties">
    <phDependence>
        <text evidence="5">Optimum pH is 7.5.</text>
    </phDependence>
    <temperatureDependence>
        <text evidence="5">Optimum temperature is 37 degrees Celsius. Loss of catalytic activity at temperatures above 50 degrees Celsius.</text>
    </temperatureDependence>
</comment>
<comment type="subunit">
    <text evidence="5">Homodimer; disulfide-linked.</text>
</comment>
<comment type="subcellular location">
    <subcellularLocation>
        <location evidence="2">Endoplasmic reticulum membrane</location>
        <topology evidence="4">Multi-pass membrane protein</topology>
    </subcellularLocation>
</comment>
<comment type="developmental stage">
    <text evidence="5">Expressed in scolex and bladder wall of metacestode larval stage. Expressed in adults.</text>
</comment>
<comment type="similarity">
    <text evidence="7">Belongs to the peptidase M48A family.</text>
</comment>
<dbReference type="EC" id="3.4.24.84" evidence="3"/>
<dbReference type="EMBL" id="DQ154010">
    <property type="protein sequence ID" value="AAZ80484.1"/>
    <property type="molecule type" value="mRNA"/>
</dbReference>
<dbReference type="SMR" id="Q3Y6B8"/>
<dbReference type="MEROPS" id="M48.003"/>
<dbReference type="GO" id="GO:0005789">
    <property type="term" value="C:endoplasmic reticulum membrane"/>
    <property type="evidence" value="ECO:0007669"/>
    <property type="project" value="UniProtKB-SubCell"/>
</dbReference>
<dbReference type="GO" id="GO:0046872">
    <property type="term" value="F:metal ion binding"/>
    <property type="evidence" value="ECO:0007669"/>
    <property type="project" value="UniProtKB-KW"/>
</dbReference>
<dbReference type="GO" id="GO:0004222">
    <property type="term" value="F:metalloendopeptidase activity"/>
    <property type="evidence" value="ECO:0000314"/>
    <property type="project" value="UniProtKB"/>
</dbReference>
<dbReference type="GO" id="GO:0071586">
    <property type="term" value="P:CAAX-box protein processing"/>
    <property type="evidence" value="ECO:0007669"/>
    <property type="project" value="InterPro"/>
</dbReference>
<dbReference type="GO" id="GO:0006508">
    <property type="term" value="P:proteolysis"/>
    <property type="evidence" value="ECO:0000314"/>
    <property type="project" value="UniProtKB"/>
</dbReference>
<dbReference type="CDD" id="cd07343">
    <property type="entry name" value="M48A_Zmpste24p_like"/>
    <property type="match status" value="1"/>
</dbReference>
<dbReference type="FunFam" id="3.30.2010.10:FF:000016">
    <property type="entry name" value="CAAX prenyl protease"/>
    <property type="match status" value="1"/>
</dbReference>
<dbReference type="Gene3D" id="3.30.2010.10">
    <property type="entry name" value="Metalloproteases ('zincins'), catalytic domain"/>
    <property type="match status" value="1"/>
</dbReference>
<dbReference type="InterPro" id="IPR027057">
    <property type="entry name" value="CAXX_Prtase_1"/>
</dbReference>
<dbReference type="InterPro" id="IPR001915">
    <property type="entry name" value="Peptidase_M48"/>
</dbReference>
<dbReference type="InterPro" id="IPR032456">
    <property type="entry name" value="Peptidase_M48_N"/>
</dbReference>
<dbReference type="PANTHER" id="PTHR10120">
    <property type="entry name" value="CAAX PRENYL PROTEASE 1"/>
    <property type="match status" value="1"/>
</dbReference>
<dbReference type="Pfam" id="PF01435">
    <property type="entry name" value="Peptidase_M48"/>
    <property type="match status" value="1"/>
</dbReference>
<dbReference type="Pfam" id="PF16491">
    <property type="entry name" value="Peptidase_M48_N"/>
    <property type="match status" value="1"/>
</dbReference>
<name>FACE_TAESO</name>
<keyword id="KW-1015">Disulfide bond</keyword>
<keyword id="KW-0256">Endoplasmic reticulum</keyword>
<keyword id="KW-0378">Hydrolase</keyword>
<keyword id="KW-0472">Membrane</keyword>
<keyword id="KW-0479">Metal-binding</keyword>
<keyword id="KW-0482">Metalloprotease</keyword>
<keyword id="KW-0645">Protease</keyword>
<keyword id="KW-0812">Transmembrane</keyword>
<keyword id="KW-1133">Transmembrane helix</keyword>
<keyword id="KW-0862">Zinc</keyword>
<feature type="chain" id="PRO_0000444118" description="CAAX prenyl protease 1 homolog">
    <location>
        <begin position="1"/>
        <end position="472"/>
    </location>
</feature>
<feature type="topological domain" description="Lumenal" evidence="7">
    <location>
        <begin position="1"/>
        <end position="8"/>
    </location>
</feature>
<feature type="transmembrane region" description="Helical" evidence="4">
    <location>
        <begin position="9"/>
        <end position="29"/>
    </location>
</feature>
<feature type="topological domain" description="Cytoplasmic" evidence="7">
    <location>
        <begin position="30"/>
        <end position="75"/>
    </location>
</feature>
<feature type="transmembrane region" description="Helical" evidence="4">
    <location>
        <begin position="76"/>
        <end position="96"/>
    </location>
</feature>
<feature type="topological domain" description="Lumenal" evidence="7">
    <location>
        <begin position="97"/>
        <end position="124"/>
    </location>
</feature>
<feature type="transmembrane region" description="Helical" evidence="4">
    <location>
        <begin position="125"/>
        <end position="145"/>
    </location>
</feature>
<feature type="topological domain" description="Cytoplasmic" evidence="7">
    <location>
        <begin position="146"/>
        <end position="175"/>
    </location>
</feature>
<feature type="transmembrane region" description="Helical" evidence="4">
    <location>
        <begin position="176"/>
        <end position="196"/>
    </location>
</feature>
<feature type="topological domain" description="Lumenal" evidence="7">
    <location>
        <begin position="197"/>
        <end position="207"/>
    </location>
</feature>
<feature type="transmembrane region" description="Helical" evidence="4">
    <location>
        <begin position="208"/>
        <end position="228"/>
    </location>
</feature>
<feature type="topological domain" description="Cytoplasmic" evidence="7">
    <location>
        <begin position="229"/>
        <end position="340"/>
    </location>
</feature>
<feature type="transmembrane region" description="Helical" evidence="4">
    <location>
        <begin position="341"/>
        <end position="361"/>
    </location>
</feature>
<feature type="topological domain" description="Lumenal" evidence="7">
    <location>
        <begin position="362"/>
        <end position="382"/>
    </location>
</feature>
<feature type="transmembrane region" description="Helical" evidence="4">
    <location>
        <begin position="383"/>
        <end position="403"/>
    </location>
</feature>
<feature type="topological domain" description="Cytoplasmic" evidence="7">
    <location>
        <begin position="404"/>
        <end position="472"/>
    </location>
</feature>
<feature type="active site" evidence="1">
    <location>
        <position position="330"/>
    </location>
</feature>
<feature type="active site" description="Proton donor" evidence="4">
    <location>
        <position position="414"/>
    </location>
</feature>
<feature type="binding site" evidence="1">
    <location>
        <position position="329"/>
    </location>
    <ligand>
        <name>Zn(2+)</name>
        <dbReference type="ChEBI" id="CHEBI:29105"/>
        <note>catalytic</note>
    </ligand>
</feature>
<feature type="binding site" evidence="1">
    <location>
        <position position="333"/>
    </location>
    <ligand>
        <name>Zn(2+)</name>
        <dbReference type="ChEBI" id="CHEBI:29105"/>
        <note>catalytic</note>
    </ligand>
</feature>
<feature type="binding site" evidence="1">
    <location>
        <position position="410"/>
    </location>
    <ligand>
        <name>Zn(2+)</name>
        <dbReference type="ChEBI" id="CHEBI:29105"/>
        <note>catalytic</note>
    </ligand>
</feature>
<organism evidence="9">
    <name type="scientific">Taenia solium</name>
    <name type="common">Pork tapeworm</name>
    <dbReference type="NCBI Taxonomy" id="6204"/>
    <lineage>
        <taxon>Eukaryota</taxon>
        <taxon>Metazoa</taxon>
        <taxon>Spiralia</taxon>
        <taxon>Lophotrochozoa</taxon>
        <taxon>Platyhelminthes</taxon>
        <taxon>Cestoda</taxon>
        <taxon>Eucestoda</taxon>
        <taxon>Cyclophyllidea</taxon>
        <taxon>Taeniidae</taxon>
        <taxon>Taenia</taxon>
    </lineage>
</organism>